<feature type="transit peptide" description="Chloroplast" evidence="2">
    <location>
        <begin position="1"/>
        <end position="42"/>
    </location>
</feature>
<feature type="chain" id="PRO_0000442023" description="Monodehydroascorbate reductase 5, chlorplastic">
    <location>
        <begin position="43"/>
        <end position="491"/>
    </location>
</feature>
<feature type="binding site" evidence="1">
    <location>
        <begin position="61"/>
        <end position="64"/>
    </location>
    <ligand>
        <name>FAD</name>
        <dbReference type="ChEBI" id="CHEBI:57692"/>
    </ligand>
</feature>
<feature type="binding site" evidence="1">
    <location>
        <position position="88"/>
    </location>
    <ligand>
        <name>FAD</name>
        <dbReference type="ChEBI" id="CHEBI:57692"/>
    </ligand>
</feature>
<feature type="binding site" evidence="1">
    <location>
        <position position="95"/>
    </location>
    <ligand>
        <name>FAD</name>
        <dbReference type="ChEBI" id="CHEBI:57692"/>
    </ligand>
</feature>
<feature type="binding site" evidence="1">
    <location>
        <position position="100"/>
    </location>
    <ligand>
        <name>FAD</name>
        <dbReference type="ChEBI" id="CHEBI:57692"/>
    </ligand>
</feature>
<feature type="binding site" evidence="1">
    <location>
        <begin position="194"/>
        <end position="195"/>
    </location>
    <ligand>
        <name>FAD</name>
        <dbReference type="ChEBI" id="CHEBI:57692"/>
    </ligand>
</feature>
<feature type="binding site" evidence="1">
    <location>
        <begin position="217"/>
        <end position="223"/>
    </location>
    <ligand>
        <name>NAD(+)</name>
        <dbReference type="ChEBI" id="CHEBI:57540"/>
    </ligand>
</feature>
<feature type="binding site" evidence="1">
    <location>
        <begin position="219"/>
        <end position="223"/>
    </location>
    <ligand>
        <name>NADP(+)</name>
        <dbReference type="ChEBI" id="CHEBI:58349"/>
    </ligand>
</feature>
<feature type="binding site" evidence="1">
    <location>
        <position position="241"/>
    </location>
    <ligand>
        <name>NAD(+)</name>
        <dbReference type="ChEBI" id="CHEBI:57540"/>
    </ligand>
</feature>
<feature type="binding site" evidence="1">
    <location>
        <position position="247"/>
    </location>
    <ligand>
        <name>NAD(+)</name>
        <dbReference type="ChEBI" id="CHEBI:57540"/>
    </ligand>
</feature>
<feature type="binding site" evidence="1">
    <location>
        <position position="247"/>
    </location>
    <ligand>
        <name>NADP(+)</name>
        <dbReference type="ChEBI" id="CHEBI:58349"/>
    </ligand>
</feature>
<feature type="binding site" evidence="1">
    <location>
        <position position="306"/>
    </location>
    <ligand>
        <name>NAD(+)</name>
        <dbReference type="ChEBI" id="CHEBI:57540"/>
    </ligand>
</feature>
<feature type="binding site" evidence="1">
    <location>
        <position position="306"/>
    </location>
    <ligand>
        <name>NADP(+)</name>
        <dbReference type="ChEBI" id="CHEBI:58349"/>
    </ligand>
</feature>
<feature type="binding site" evidence="1">
    <location>
        <position position="344"/>
    </location>
    <ligand>
        <name>FAD</name>
        <dbReference type="ChEBI" id="CHEBI:57692"/>
    </ligand>
</feature>
<feature type="binding site" evidence="1">
    <location>
        <begin position="360"/>
        <end position="361"/>
    </location>
    <ligand>
        <name>NAD(+)</name>
        <dbReference type="ChEBI" id="CHEBI:57540"/>
    </ligand>
</feature>
<feature type="binding site" evidence="1">
    <location>
        <begin position="360"/>
        <end position="361"/>
    </location>
    <ligand>
        <name>NADP(+)</name>
        <dbReference type="ChEBI" id="CHEBI:58349"/>
    </ligand>
</feature>
<feature type="binding site" evidence="1">
    <location>
        <position position="362"/>
    </location>
    <ligand>
        <name>FAD</name>
        <dbReference type="ChEBI" id="CHEBI:57692"/>
    </ligand>
</feature>
<feature type="binding site" evidence="1">
    <location>
        <position position="366"/>
    </location>
    <ligand>
        <name>L-ascorbate</name>
        <dbReference type="ChEBI" id="CHEBI:38290"/>
    </ligand>
</feature>
<feature type="binding site" evidence="1">
    <location>
        <position position="391"/>
    </location>
    <ligand>
        <name>FAD</name>
        <dbReference type="ChEBI" id="CHEBI:57692"/>
    </ligand>
</feature>
<feature type="binding site" evidence="1">
    <location>
        <position position="391"/>
    </location>
    <ligand>
        <name>NAD(+)</name>
        <dbReference type="ChEBI" id="CHEBI:57540"/>
    </ligand>
</feature>
<feature type="binding site" evidence="1">
    <location>
        <position position="391"/>
    </location>
    <ligand>
        <name>NADP(+)</name>
        <dbReference type="ChEBI" id="CHEBI:58349"/>
    </ligand>
</feature>
<feature type="binding site" evidence="1">
    <location>
        <position position="393"/>
    </location>
    <ligand>
        <name>L-ascorbate</name>
        <dbReference type="ChEBI" id="CHEBI:38290"/>
    </ligand>
</feature>
<reference key="1">
    <citation type="journal article" date="2005" name="Nature">
        <title>The map-based sequence of the rice genome.</title>
        <authorList>
            <consortium name="International rice genome sequencing project (IRGSP)"/>
        </authorList>
    </citation>
    <scope>NUCLEOTIDE SEQUENCE [LARGE SCALE GENOMIC DNA]</scope>
    <source>
        <strain>cv. Nipponbare</strain>
    </source>
</reference>
<reference key="2">
    <citation type="journal article" date="2008" name="Nucleic Acids Res.">
        <title>The rice annotation project database (RAP-DB): 2008 update.</title>
        <authorList>
            <consortium name="The rice annotation project (RAP)"/>
        </authorList>
    </citation>
    <scope>GENOME REANNOTATION</scope>
    <source>
        <strain>cv. Nipponbare</strain>
    </source>
</reference>
<reference key="3">
    <citation type="journal article" date="2013" name="Rice">
        <title>Improvement of the Oryza sativa Nipponbare reference genome using next generation sequence and optical map data.</title>
        <authorList>
            <person name="Kawahara Y."/>
            <person name="de la Bastide M."/>
            <person name="Hamilton J.P."/>
            <person name="Kanamori H."/>
            <person name="McCombie W.R."/>
            <person name="Ouyang S."/>
            <person name="Schwartz D.C."/>
            <person name="Tanaka T."/>
            <person name="Wu J."/>
            <person name="Zhou S."/>
            <person name="Childs K.L."/>
            <person name="Davidson R.M."/>
            <person name="Lin H."/>
            <person name="Quesada-Ocampo L."/>
            <person name="Vaillancourt B."/>
            <person name="Sakai H."/>
            <person name="Lee S.S."/>
            <person name="Kim J."/>
            <person name="Numa H."/>
            <person name="Itoh T."/>
            <person name="Buell C.R."/>
            <person name="Matsumoto T."/>
        </authorList>
    </citation>
    <scope>GENOME REANNOTATION</scope>
    <source>
        <strain>cv. Nipponbare</strain>
    </source>
</reference>
<reference key="4">
    <citation type="journal article" date="2015" name="J. Plant Physiol.">
        <title>Transcriptional profile of genes involved in ascorbate glutathione cycle in senescing leaves for an early senescence leaf (esl) rice mutant.</title>
        <authorList>
            <person name="Li Z."/>
            <person name="Su D."/>
            <person name="Lei B."/>
            <person name="Wang F."/>
            <person name="Geng W."/>
            <person name="Pan G."/>
            <person name="Cheng F."/>
        </authorList>
    </citation>
    <scope>INDUCTION</scope>
</reference>
<gene>
    <name evidence="4" type="primary">MDAR5</name>
    <name evidence="4" type="synonym">MDHAR5</name>
    <name evidence="8" type="ordered locus">Os08g0151800</name>
    <name evidence="5" type="ordered locus">LOC_Os08g05570</name>
    <name evidence="7" type="ORF">OJ1349_D05.106</name>
    <name evidence="6" type="ORF">P0443G08.138</name>
</gene>
<proteinExistence type="evidence at transcript level"/>
<comment type="function">
    <text evidence="1">Catalyzes the conversion of monodehydroascorbate to ascorbate, oxidizing NADH in the process. Ascorbate is a major antioxidant against reactive oxygen species (ROS) and nitric oxide (NO).</text>
</comment>
<comment type="catalytic activity">
    <reaction evidence="1">
        <text>2 monodehydro-L-ascorbate radical + NADH + H(+) = 2 L-ascorbate + NAD(+)</text>
        <dbReference type="Rhea" id="RHEA:14581"/>
        <dbReference type="ChEBI" id="CHEBI:15378"/>
        <dbReference type="ChEBI" id="CHEBI:38290"/>
        <dbReference type="ChEBI" id="CHEBI:57540"/>
        <dbReference type="ChEBI" id="CHEBI:57945"/>
        <dbReference type="ChEBI" id="CHEBI:59513"/>
        <dbReference type="EC" id="1.6.5.4"/>
    </reaction>
</comment>
<comment type="cofactor">
    <cofactor evidence="1">
        <name>FAD</name>
        <dbReference type="ChEBI" id="CHEBI:57692"/>
    </cofactor>
</comment>
<comment type="subcellular location">
    <subcellularLocation>
        <location evidence="2">Plastid</location>
        <location evidence="2">Chloroplast</location>
    </subcellularLocation>
</comment>
<comment type="induction">
    <text evidence="3">Down-regulated during senescence.</text>
</comment>
<comment type="similarity">
    <text evidence="5">Belongs to the FAD-dependent oxidoreductase family.</text>
</comment>
<accession>Q84PW3</accession>
<evidence type="ECO:0000250" key="1">
    <source>
        <dbReference type="UniProtKB" id="Q652L6"/>
    </source>
</evidence>
<evidence type="ECO:0000255" key="2"/>
<evidence type="ECO:0000269" key="3">
    <source>
    </source>
</evidence>
<evidence type="ECO:0000303" key="4">
    <source>
    </source>
</evidence>
<evidence type="ECO:0000305" key="5"/>
<evidence type="ECO:0000312" key="6">
    <source>
        <dbReference type="EMBL" id="BAC98552.1"/>
    </source>
</evidence>
<evidence type="ECO:0000312" key="7">
    <source>
        <dbReference type="EMBL" id="BAC99756.1"/>
    </source>
</evidence>
<evidence type="ECO:0000312" key="8">
    <source>
        <dbReference type="EMBL" id="BAF22916.1"/>
    </source>
</evidence>
<sequence length="491" mass="52759">MASTAAAASSQGCISWALRQRGLGGGGARAVPVLPRRRFCVSAAAGAGFDNENREYVIVGGGNAAGYAARTFVEHGMADGRLCIVSKEAYPPYERPALTKGYLFPPDKKPARLPGFHTCVGSGGQRQTAEWYKENGIEVLYEDPVVAFDGKTHTLKTSSGKILKYGSLIISTGCEASRLPAKIGGNLPGVHYIRDVADADSLVSSLGKAKKIVVIGGGYIGMEVAAAACGWNLDTTIIFPEDHIMPRLFTPSLAKKYEELYQQNGVKFIKGALIDKLEAGSDGRVSSAVLEDGSVVEADTVIVGIGARPVIGPFEAVGVNTKVGGIEVDSLFRTSIPGIFAIGDVAAFPLKMYDRMTRVEHVDHARKSAHHCVEALLTSHTKPYDYLPYFYSRVFEYEGSSRKIWWQFYGDNVGETIEVGSFEPKIATFWIDSDSRLKGVFLESGSSEEFSLLPQLAKSQPVVDKAKLKSATSVEDALEIARSSLHSGSSV</sequence>
<organism>
    <name type="scientific">Oryza sativa subsp. japonica</name>
    <name type="common">Rice</name>
    <dbReference type="NCBI Taxonomy" id="39947"/>
    <lineage>
        <taxon>Eukaryota</taxon>
        <taxon>Viridiplantae</taxon>
        <taxon>Streptophyta</taxon>
        <taxon>Embryophyta</taxon>
        <taxon>Tracheophyta</taxon>
        <taxon>Spermatophyta</taxon>
        <taxon>Magnoliopsida</taxon>
        <taxon>Liliopsida</taxon>
        <taxon>Poales</taxon>
        <taxon>Poaceae</taxon>
        <taxon>BOP clade</taxon>
        <taxon>Oryzoideae</taxon>
        <taxon>Oryzeae</taxon>
        <taxon>Oryzinae</taxon>
        <taxon>Oryza</taxon>
        <taxon>Oryza sativa</taxon>
    </lineage>
</organism>
<protein>
    <recommendedName>
        <fullName evidence="5">Monodehydroascorbate reductase 5, chlorplastic</fullName>
        <shortName evidence="4">OsMADR5</shortName>
        <shortName evidence="4">OsMDHAR5</shortName>
        <ecNumber evidence="1">1.6.5.4</ecNumber>
    </recommendedName>
</protein>
<name>MDAR5_ORYSJ</name>
<dbReference type="EC" id="1.6.5.4" evidence="1"/>
<dbReference type="EMBL" id="AP004461">
    <property type="protein sequence ID" value="BAC98552.1"/>
    <property type="molecule type" value="Genomic_DNA"/>
</dbReference>
<dbReference type="EMBL" id="AP005467">
    <property type="protein sequence ID" value="BAC99756.1"/>
    <property type="molecule type" value="Genomic_DNA"/>
</dbReference>
<dbReference type="EMBL" id="AP008214">
    <property type="protein sequence ID" value="BAF22916.1"/>
    <property type="molecule type" value="Genomic_DNA"/>
</dbReference>
<dbReference type="EMBL" id="AP014964">
    <property type="protein sequence ID" value="BAT03846.1"/>
    <property type="molecule type" value="Genomic_DNA"/>
</dbReference>
<dbReference type="RefSeq" id="XP_015649952.1">
    <property type="nucleotide sequence ID" value="XM_015794466.1"/>
</dbReference>
<dbReference type="SMR" id="Q84PW3"/>
<dbReference type="FunCoup" id="Q84PW3">
    <property type="interactions" value="1347"/>
</dbReference>
<dbReference type="STRING" id="39947.Q84PW3"/>
<dbReference type="CarbonylDB" id="Q84PW3"/>
<dbReference type="PaxDb" id="39947-Q84PW3"/>
<dbReference type="EnsemblPlants" id="Os08t0151800-01">
    <property type="protein sequence ID" value="Os08t0151800-01"/>
    <property type="gene ID" value="Os08g0151800"/>
</dbReference>
<dbReference type="Gramene" id="Os08t0151800-01">
    <property type="protein sequence ID" value="Os08t0151800-01"/>
    <property type="gene ID" value="Os08g0151800"/>
</dbReference>
<dbReference type="KEGG" id="dosa:Os08g0151800"/>
<dbReference type="eggNOG" id="KOG1336">
    <property type="taxonomic scope" value="Eukaryota"/>
</dbReference>
<dbReference type="HOGENOM" id="CLU_003291_4_1_1"/>
<dbReference type="InParanoid" id="Q84PW3"/>
<dbReference type="OMA" id="TSHTKPY"/>
<dbReference type="OrthoDB" id="432169at2759"/>
<dbReference type="Proteomes" id="UP000000763">
    <property type="component" value="Chromosome 8"/>
</dbReference>
<dbReference type="Proteomes" id="UP000059680">
    <property type="component" value="Chromosome 8"/>
</dbReference>
<dbReference type="GO" id="GO:0009507">
    <property type="term" value="C:chloroplast"/>
    <property type="evidence" value="ECO:0007669"/>
    <property type="project" value="UniProtKB-SubCell"/>
</dbReference>
<dbReference type="GO" id="GO:0005737">
    <property type="term" value="C:cytoplasm"/>
    <property type="evidence" value="ECO:0000318"/>
    <property type="project" value="GO_Central"/>
</dbReference>
<dbReference type="GO" id="GO:0005739">
    <property type="term" value="C:mitochondrion"/>
    <property type="evidence" value="ECO:0007669"/>
    <property type="project" value="EnsemblPlants"/>
</dbReference>
<dbReference type="GO" id="GO:0010319">
    <property type="term" value="C:stromule"/>
    <property type="evidence" value="ECO:0007669"/>
    <property type="project" value="EnsemblPlants"/>
</dbReference>
<dbReference type="GO" id="GO:0016656">
    <property type="term" value="F:monodehydroascorbate reductase (NADH) activity"/>
    <property type="evidence" value="ECO:0007669"/>
    <property type="project" value="UniProtKB-EC"/>
</dbReference>
<dbReference type="GO" id="GO:0016651">
    <property type="term" value="F:oxidoreductase activity, acting on NAD(P)H"/>
    <property type="evidence" value="ECO:0000318"/>
    <property type="project" value="GO_Central"/>
</dbReference>
<dbReference type="GO" id="GO:0009409">
    <property type="term" value="P:response to cold"/>
    <property type="evidence" value="ECO:0007669"/>
    <property type="project" value="EnsemblPlants"/>
</dbReference>
<dbReference type="Gene3D" id="3.30.390.30">
    <property type="match status" value="1"/>
</dbReference>
<dbReference type="Gene3D" id="3.50.50.60">
    <property type="entry name" value="FAD/NAD(P)-binding domain"/>
    <property type="match status" value="2"/>
</dbReference>
<dbReference type="InterPro" id="IPR050446">
    <property type="entry name" value="FAD-oxidoreductase/Apoptosis"/>
</dbReference>
<dbReference type="InterPro" id="IPR036188">
    <property type="entry name" value="FAD/NAD-bd_sf"/>
</dbReference>
<dbReference type="InterPro" id="IPR023753">
    <property type="entry name" value="FAD/NAD-binding_dom"/>
</dbReference>
<dbReference type="InterPro" id="IPR016156">
    <property type="entry name" value="FAD/NAD-linked_Rdtase_dimer_sf"/>
</dbReference>
<dbReference type="InterPro" id="IPR048618">
    <property type="entry name" value="MDHAR3-like_C"/>
</dbReference>
<dbReference type="PANTHER" id="PTHR43557">
    <property type="entry name" value="APOPTOSIS-INDUCING FACTOR 1"/>
    <property type="match status" value="1"/>
</dbReference>
<dbReference type="PANTHER" id="PTHR43557:SF6">
    <property type="entry name" value="MONODEHYDROASCORBATE REDUCTASE, CHLOROPLASTIC_MITOCHONDRIAL"/>
    <property type="match status" value="1"/>
</dbReference>
<dbReference type="Pfam" id="PF21791">
    <property type="entry name" value="MDHAR3-like_C"/>
    <property type="match status" value="1"/>
</dbReference>
<dbReference type="Pfam" id="PF07992">
    <property type="entry name" value="Pyr_redox_2"/>
    <property type="match status" value="1"/>
</dbReference>
<dbReference type="PRINTS" id="PR00368">
    <property type="entry name" value="FADPNR"/>
</dbReference>
<dbReference type="PRINTS" id="PR00411">
    <property type="entry name" value="PNDRDTASEI"/>
</dbReference>
<dbReference type="SUPFAM" id="SSF51905">
    <property type="entry name" value="FAD/NAD(P)-binding domain"/>
    <property type="match status" value="1"/>
</dbReference>
<keyword id="KW-0150">Chloroplast</keyword>
<keyword id="KW-0274">FAD</keyword>
<keyword id="KW-0285">Flavoprotein</keyword>
<keyword id="KW-0520">NAD</keyword>
<keyword id="KW-0521">NADP</keyword>
<keyword id="KW-0560">Oxidoreductase</keyword>
<keyword id="KW-0934">Plastid</keyword>
<keyword id="KW-0676">Redox-active center</keyword>
<keyword id="KW-1185">Reference proteome</keyword>
<keyword id="KW-0809">Transit peptide</keyword>